<keyword id="KW-1015">Disulfide bond</keyword>
<keyword id="KW-0325">Glycoprotein</keyword>
<keyword id="KW-0430">Lectin</keyword>
<keyword id="KW-1267">Proteomics identification</keyword>
<keyword id="KW-1185">Reference proteome</keyword>
<keyword id="KW-0964">Secreted</keyword>
<keyword id="KW-0732">Signal</keyword>
<feature type="signal peptide" evidence="1">
    <location>
        <begin position="1"/>
        <end position="22"/>
    </location>
</feature>
<feature type="chain" id="PRO_0000017425" description="Lithostathine-1-beta">
    <location>
        <begin position="23"/>
        <end position="166"/>
    </location>
</feature>
<feature type="domain" description="C-type lectin" evidence="2">
    <location>
        <begin position="34"/>
        <end position="164"/>
    </location>
</feature>
<feature type="glycosylation site" description="O-linked (GalNAc...) threonine" evidence="3">
    <location>
        <position position="27"/>
    </location>
</feature>
<feature type="disulfide bond" evidence="2">
    <location>
        <begin position="36"/>
        <end position="47"/>
    </location>
</feature>
<feature type="disulfide bond" evidence="2">
    <location>
        <begin position="64"/>
        <end position="162"/>
    </location>
</feature>
<feature type="disulfide bond" evidence="2">
    <location>
        <begin position="137"/>
        <end position="154"/>
    </location>
</feature>
<feature type="sequence variant" id="VAR_050121" description="In dbSNP:rs7586984.">
    <original>R</original>
    <variation>H</variation>
    <location>
        <position position="109"/>
    </location>
</feature>
<dbReference type="EMBL" id="L08010">
    <property type="protein sequence ID" value="AAA18204.1"/>
    <property type="molecule type" value="Genomic_DNA"/>
</dbReference>
<dbReference type="EMBL" id="D17291">
    <property type="protein sequence ID" value="BAA04124.1"/>
    <property type="molecule type" value="Genomic_DNA"/>
</dbReference>
<dbReference type="EMBL" id="D16816">
    <property type="protein sequence ID" value="BAA04091.1"/>
    <property type="molecule type" value="mRNA"/>
</dbReference>
<dbReference type="EMBL" id="BC027895">
    <property type="protein sequence ID" value="AAH27895.1"/>
    <property type="molecule type" value="mRNA"/>
</dbReference>
<dbReference type="CCDS" id="CCDS1963.1"/>
<dbReference type="PIR" id="S34591">
    <property type="entry name" value="RGHU1B"/>
</dbReference>
<dbReference type="RefSeq" id="NP_006498.1">
    <property type="nucleotide sequence ID" value="NM_006507.4"/>
</dbReference>
<dbReference type="SMR" id="P48304"/>
<dbReference type="BioGRID" id="111900">
    <property type="interactions" value="6"/>
</dbReference>
<dbReference type="FunCoup" id="P48304">
    <property type="interactions" value="23"/>
</dbReference>
<dbReference type="IntAct" id="P48304">
    <property type="interactions" value="5"/>
</dbReference>
<dbReference type="MINT" id="P48304"/>
<dbReference type="STRING" id="9606.ENSP00000303206"/>
<dbReference type="MEROPS" id="I63.002"/>
<dbReference type="GlyCosmos" id="P48304">
    <property type="glycosylation" value="1 site, No reported glycans"/>
</dbReference>
<dbReference type="GlyGen" id="P48304">
    <property type="glycosylation" value="2 sites"/>
</dbReference>
<dbReference type="iPTMnet" id="P48304"/>
<dbReference type="PhosphoSitePlus" id="P48304"/>
<dbReference type="BioMuta" id="REG1B"/>
<dbReference type="DMDM" id="1346460"/>
<dbReference type="MassIVE" id="P48304"/>
<dbReference type="PaxDb" id="9606-ENSP00000303206"/>
<dbReference type="PeptideAtlas" id="P48304"/>
<dbReference type="ProteomicsDB" id="55874"/>
<dbReference type="Antibodypedia" id="47486">
    <property type="antibodies" value="184 antibodies from 21 providers"/>
</dbReference>
<dbReference type="DNASU" id="5968"/>
<dbReference type="Ensembl" id="ENST00000305089.8">
    <property type="protein sequence ID" value="ENSP00000303206.3"/>
    <property type="gene ID" value="ENSG00000172023.8"/>
</dbReference>
<dbReference type="GeneID" id="5968"/>
<dbReference type="KEGG" id="hsa:5968"/>
<dbReference type="MANE-Select" id="ENST00000305089.8">
    <property type="protein sequence ID" value="ENSP00000303206.3"/>
    <property type="RefSeq nucleotide sequence ID" value="NM_006507.4"/>
    <property type="RefSeq protein sequence ID" value="NP_006498.1"/>
</dbReference>
<dbReference type="AGR" id="HGNC:9952"/>
<dbReference type="CTD" id="5968"/>
<dbReference type="DisGeNET" id="5968"/>
<dbReference type="GeneCards" id="REG1B"/>
<dbReference type="HGNC" id="HGNC:9952">
    <property type="gene designation" value="REG1B"/>
</dbReference>
<dbReference type="HPA" id="ENSG00000172023">
    <property type="expression patterns" value="Tissue enriched (pancreas)"/>
</dbReference>
<dbReference type="MIM" id="167771">
    <property type="type" value="gene"/>
</dbReference>
<dbReference type="neXtProt" id="NX_P48304"/>
<dbReference type="OpenTargets" id="ENSG00000172023"/>
<dbReference type="PharmGKB" id="PA34319"/>
<dbReference type="VEuPathDB" id="HostDB:ENSG00000172023"/>
<dbReference type="eggNOG" id="KOG4297">
    <property type="taxonomic scope" value="Eukaryota"/>
</dbReference>
<dbReference type="GeneTree" id="ENSGT00940000163728"/>
<dbReference type="HOGENOM" id="CLU_049894_18_0_1"/>
<dbReference type="InParanoid" id="P48304"/>
<dbReference type="OMA" id="MAQTNTC"/>
<dbReference type="OrthoDB" id="441660at2759"/>
<dbReference type="PAN-GO" id="P48304">
    <property type="GO annotations" value="8 GO annotations based on evolutionary models"/>
</dbReference>
<dbReference type="PhylomeDB" id="P48304"/>
<dbReference type="PathwayCommons" id="P48304"/>
<dbReference type="SignaLink" id="P48304"/>
<dbReference type="BioGRID-ORCS" id="5968">
    <property type="hits" value="8 hits in 1100 CRISPR screens"/>
</dbReference>
<dbReference type="ChiTaRS" id="REG1B">
    <property type="organism name" value="human"/>
</dbReference>
<dbReference type="GeneWiki" id="REG1B"/>
<dbReference type="GenomeRNAi" id="5968"/>
<dbReference type="Pharos" id="P48304">
    <property type="development level" value="Tbio"/>
</dbReference>
<dbReference type="PRO" id="PR:P48304"/>
<dbReference type="Proteomes" id="UP000005640">
    <property type="component" value="Chromosome 2"/>
</dbReference>
<dbReference type="RNAct" id="P48304">
    <property type="molecule type" value="protein"/>
</dbReference>
<dbReference type="Bgee" id="ENSG00000172023">
    <property type="expression patterns" value="Expressed in body of pancreas and 87 other cell types or tissues"/>
</dbReference>
<dbReference type="ExpressionAtlas" id="P48304">
    <property type="expression patterns" value="baseline and differential"/>
</dbReference>
<dbReference type="GO" id="GO:0070062">
    <property type="term" value="C:extracellular exosome"/>
    <property type="evidence" value="ECO:0007005"/>
    <property type="project" value="UniProtKB"/>
</dbReference>
<dbReference type="GO" id="GO:0005615">
    <property type="term" value="C:extracellular space"/>
    <property type="evidence" value="ECO:0000318"/>
    <property type="project" value="GO_Central"/>
</dbReference>
<dbReference type="GO" id="GO:0070492">
    <property type="term" value="F:oligosaccharide binding"/>
    <property type="evidence" value="ECO:0000318"/>
    <property type="project" value="GO_Central"/>
</dbReference>
<dbReference type="GO" id="GO:0042834">
    <property type="term" value="F:peptidoglycan binding"/>
    <property type="evidence" value="ECO:0000318"/>
    <property type="project" value="GO_Central"/>
</dbReference>
<dbReference type="GO" id="GO:0038023">
    <property type="term" value="F:signaling receptor activity"/>
    <property type="evidence" value="ECO:0000318"/>
    <property type="project" value="GO_Central"/>
</dbReference>
<dbReference type="GO" id="GO:0061844">
    <property type="term" value="P:antimicrobial humoral immune response mediated by antimicrobial peptide"/>
    <property type="evidence" value="ECO:0000318"/>
    <property type="project" value="GO_Central"/>
</dbReference>
<dbReference type="GO" id="GO:0008284">
    <property type="term" value="P:positive regulation of cell population proliferation"/>
    <property type="evidence" value="ECO:0000318"/>
    <property type="project" value="GO_Central"/>
</dbReference>
<dbReference type="GO" id="GO:0043434">
    <property type="term" value="P:response to peptide hormone"/>
    <property type="evidence" value="ECO:0000318"/>
    <property type="project" value="GO_Central"/>
</dbReference>
<dbReference type="FunFam" id="3.10.100.10:FF:000059">
    <property type="entry name" value="Regenerating islet-derived 1"/>
    <property type="match status" value="1"/>
</dbReference>
<dbReference type="Gene3D" id="3.10.100.10">
    <property type="entry name" value="Mannose-Binding Protein A, subunit A"/>
    <property type="match status" value="1"/>
</dbReference>
<dbReference type="InterPro" id="IPR001304">
    <property type="entry name" value="C-type_lectin-like"/>
</dbReference>
<dbReference type="InterPro" id="IPR016186">
    <property type="entry name" value="C-type_lectin-like/link_sf"/>
</dbReference>
<dbReference type="InterPro" id="IPR050111">
    <property type="entry name" value="C-type_lectin/snaclec_domain"/>
</dbReference>
<dbReference type="InterPro" id="IPR018378">
    <property type="entry name" value="C-type_lectin_CS"/>
</dbReference>
<dbReference type="InterPro" id="IPR016187">
    <property type="entry name" value="CTDL_fold"/>
</dbReference>
<dbReference type="PANTHER" id="PTHR22803">
    <property type="entry name" value="MANNOSE, PHOSPHOLIPASE, LECTIN RECEPTOR RELATED"/>
    <property type="match status" value="1"/>
</dbReference>
<dbReference type="Pfam" id="PF00059">
    <property type="entry name" value="Lectin_C"/>
    <property type="match status" value="1"/>
</dbReference>
<dbReference type="PRINTS" id="PR01504">
    <property type="entry name" value="PNCREATITSAP"/>
</dbReference>
<dbReference type="SMART" id="SM00034">
    <property type="entry name" value="CLECT"/>
    <property type="match status" value="1"/>
</dbReference>
<dbReference type="SUPFAM" id="SSF56436">
    <property type="entry name" value="C-type lectin-like"/>
    <property type="match status" value="1"/>
</dbReference>
<dbReference type="PROSITE" id="PS00615">
    <property type="entry name" value="C_TYPE_LECTIN_1"/>
    <property type="match status" value="1"/>
</dbReference>
<dbReference type="PROSITE" id="PS50041">
    <property type="entry name" value="C_TYPE_LECTIN_2"/>
    <property type="match status" value="1"/>
</dbReference>
<protein>
    <recommendedName>
        <fullName>Lithostathine-1-beta</fullName>
    </recommendedName>
    <alternativeName>
        <fullName>Pancreatic stone protein 2</fullName>
        <shortName>PSP-2</shortName>
    </alternativeName>
    <alternativeName>
        <fullName>Regenerating islet-derived protein 1-beta</fullName>
        <shortName>REG-1-beta</shortName>
    </alternativeName>
    <alternativeName>
        <fullName>Regenerating protein I beta</fullName>
    </alternativeName>
</protein>
<organism>
    <name type="scientific">Homo sapiens</name>
    <name type="common">Human</name>
    <dbReference type="NCBI Taxonomy" id="9606"/>
    <lineage>
        <taxon>Eukaryota</taxon>
        <taxon>Metazoa</taxon>
        <taxon>Chordata</taxon>
        <taxon>Craniata</taxon>
        <taxon>Vertebrata</taxon>
        <taxon>Euteleostomi</taxon>
        <taxon>Mammalia</taxon>
        <taxon>Eutheria</taxon>
        <taxon>Euarchontoglires</taxon>
        <taxon>Primates</taxon>
        <taxon>Haplorrhini</taxon>
        <taxon>Catarrhini</taxon>
        <taxon>Hominidae</taxon>
        <taxon>Homo</taxon>
    </lineage>
</organism>
<reference key="1">
    <citation type="journal article" date="1993" name="FEBS Lett.">
        <title>A gene homologous to the reg gene is expressed in the human pancreas.</title>
        <authorList>
            <person name="Bartoli C."/>
            <person name="Gharib B."/>
            <person name="Giorgi D."/>
            <person name="Sansonetti A."/>
            <person name="Dagorn J.-C."/>
            <person name="Berge-Lefranc U."/>
        </authorList>
    </citation>
    <scope>NUCLEOTIDE SEQUENCE [GENOMIC DNA]</scope>
</reference>
<reference key="2">
    <citation type="journal article" date="1994" name="Biochim. Biophys. Acta">
        <title>Isolation, structural determination and expression of a novel reg gene, human regI beta.</title>
        <authorList>
            <person name="Moriizumi S."/>
            <person name="Watanabe T."/>
            <person name="Unno M."/>
            <person name="Nakagawara K."/>
            <person name="Suzuki Y."/>
            <person name="Miyashita H."/>
            <person name="Yonekura H."/>
            <person name="Okamoto H."/>
        </authorList>
    </citation>
    <scope>NUCLEOTIDE SEQUENCE [GENOMIC DNA / MRNA]</scope>
    <source>
        <tissue>Pancreas</tissue>
    </source>
</reference>
<reference key="3">
    <citation type="journal article" date="2004" name="Genome Res.">
        <title>The status, quality, and expansion of the NIH full-length cDNA project: the Mammalian Gene Collection (MGC).</title>
        <authorList>
            <consortium name="The MGC Project Team"/>
        </authorList>
    </citation>
    <scope>NUCLEOTIDE SEQUENCE [LARGE SCALE MRNA]</scope>
    <source>
        <tissue>Pancreas</tissue>
    </source>
</reference>
<reference key="4">
    <citation type="journal article" date="1995" name="Eur. J. Biochem.">
        <title>The glycan moiety of human pancreatic lithostathine. Structure characterization and possible pathophysiological implications.</title>
        <authorList>
            <person name="De Reggi M."/>
            <person name="Capon C."/>
            <person name="Gharib B."/>
            <person name="Wieruszeski J.-M."/>
            <person name="Michel R."/>
            <person name="Fournet B."/>
        </authorList>
    </citation>
    <scope>GLYCOSYLATION AT THR-27</scope>
</reference>
<accession>P48304</accession>
<sequence>MAQTNSFFMLISSLMFLSLSQGQESQTELPNPRISCPEGTNAYRSYCYYFNEDPETWVDADLYCQNMNSGNLVSVLTQAEGAFVASLIKESSTDDSNVWIGLHDPKKNRRWHWSSGSLVSYKSWDTGSPSSANAGYCASLTSCSGFKKWKDESCEKKFSFVCKFKN</sequence>
<gene>
    <name type="primary">REG1B</name>
    <name type="synonym">PSPS2</name>
    <name type="synonym">REGL</name>
</gene>
<evidence type="ECO:0000250" key="1"/>
<evidence type="ECO:0000255" key="2">
    <source>
        <dbReference type="PROSITE-ProRule" id="PRU00040"/>
    </source>
</evidence>
<evidence type="ECO:0000269" key="3">
    <source>
    </source>
</evidence>
<name>REG1B_HUMAN</name>
<comment type="function">
    <text>Might act as an inhibitor of spontaneous calcium carbonate precipitation. May be associated with neuronal sprouting in brain, and with brain and pancreas regeneration.</text>
</comment>
<comment type="interaction">
    <interactant intactId="EBI-716901">
        <id>P48304</id>
    </interactant>
    <interactant intactId="EBI-20721755">
        <id>P05451</id>
        <label>REG1A</label>
    </interactant>
    <organismsDiffer>false</organismsDiffer>
    <experiments>4</experiments>
</comment>
<comment type="subcellular location">
    <subcellularLocation>
        <location>Secreted</location>
    </subcellularLocation>
</comment>
<comment type="PTM">
    <text evidence="3">All O-linked glycans consist of Gal-GlcNAc-Gal-GalNAc tetrasaccharide core and get elongated (microheterogeneity).</text>
</comment>
<comment type="online information" name="Functional Glycomics Gateway - Glycan Binding">
    <link uri="http://www.functionalglycomics.org/glycomics/GBPServlet?&amp;operationType=view&amp;cbpId=cbp_hum_Ctlect_255"/>
    <text>Lithostathine A</text>
</comment>
<proteinExistence type="evidence at protein level"/>